<accession>A9MHD6</accession>
<name>THIC_SALAR</name>
<dbReference type="EC" id="4.1.99.17" evidence="1"/>
<dbReference type="EMBL" id="CP000880">
    <property type="protein sequence ID" value="ABX23319.1"/>
    <property type="molecule type" value="Genomic_DNA"/>
</dbReference>
<dbReference type="SMR" id="A9MHD6"/>
<dbReference type="STRING" id="41514.SARI_03494"/>
<dbReference type="KEGG" id="ses:SARI_03494"/>
<dbReference type="HOGENOM" id="CLU_013181_2_1_6"/>
<dbReference type="UniPathway" id="UPA00060"/>
<dbReference type="Proteomes" id="UP000002084">
    <property type="component" value="Chromosome"/>
</dbReference>
<dbReference type="GO" id="GO:0005829">
    <property type="term" value="C:cytosol"/>
    <property type="evidence" value="ECO:0007669"/>
    <property type="project" value="TreeGrafter"/>
</dbReference>
<dbReference type="GO" id="GO:0051539">
    <property type="term" value="F:4 iron, 4 sulfur cluster binding"/>
    <property type="evidence" value="ECO:0007669"/>
    <property type="project" value="UniProtKB-KW"/>
</dbReference>
<dbReference type="GO" id="GO:0016830">
    <property type="term" value="F:carbon-carbon lyase activity"/>
    <property type="evidence" value="ECO:0007669"/>
    <property type="project" value="InterPro"/>
</dbReference>
<dbReference type="GO" id="GO:0008270">
    <property type="term" value="F:zinc ion binding"/>
    <property type="evidence" value="ECO:0007669"/>
    <property type="project" value="UniProtKB-UniRule"/>
</dbReference>
<dbReference type="GO" id="GO:0009228">
    <property type="term" value="P:thiamine biosynthetic process"/>
    <property type="evidence" value="ECO:0007669"/>
    <property type="project" value="UniProtKB-KW"/>
</dbReference>
<dbReference type="GO" id="GO:0009229">
    <property type="term" value="P:thiamine diphosphate biosynthetic process"/>
    <property type="evidence" value="ECO:0007669"/>
    <property type="project" value="UniProtKB-UniRule"/>
</dbReference>
<dbReference type="FunFam" id="3.20.20.540:FF:000001">
    <property type="entry name" value="Phosphomethylpyrimidine synthase"/>
    <property type="match status" value="1"/>
</dbReference>
<dbReference type="Gene3D" id="6.10.250.620">
    <property type="match status" value="1"/>
</dbReference>
<dbReference type="Gene3D" id="3.20.20.540">
    <property type="entry name" value="Radical SAM ThiC family, central domain"/>
    <property type="match status" value="1"/>
</dbReference>
<dbReference type="HAMAP" id="MF_00089">
    <property type="entry name" value="ThiC"/>
    <property type="match status" value="1"/>
</dbReference>
<dbReference type="InterPro" id="IPR037509">
    <property type="entry name" value="ThiC"/>
</dbReference>
<dbReference type="InterPro" id="IPR025747">
    <property type="entry name" value="ThiC-associated_dom"/>
</dbReference>
<dbReference type="InterPro" id="IPR038521">
    <property type="entry name" value="ThiC/Bza_core_dom"/>
</dbReference>
<dbReference type="InterPro" id="IPR002817">
    <property type="entry name" value="ThiC/BzaA/B"/>
</dbReference>
<dbReference type="NCBIfam" id="NF006763">
    <property type="entry name" value="PRK09284.1"/>
    <property type="match status" value="1"/>
</dbReference>
<dbReference type="NCBIfam" id="NF009895">
    <property type="entry name" value="PRK13352.1"/>
    <property type="match status" value="1"/>
</dbReference>
<dbReference type="NCBIfam" id="TIGR00190">
    <property type="entry name" value="thiC"/>
    <property type="match status" value="1"/>
</dbReference>
<dbReference type="PANTHER" id="PTHR30557:SF1">
    <property type="entry name" value="PHOSPHOMETHYLPYRIMIDINE SYNTHASE, CHLOROPLASTIC"/>
    <property type="match status" value="1"/>
</dbReference>
<dbReference type="PANTHER" id="PTHR30557">
    <property type="entry name" value="THIAMINE BIOSYNTHESIS PROTEIN THIC"/>
    <property type="match status" value="1"/>
</dbReference>
<dbReference type="Pfam" id="PF13667">
    <property type="entry name" value="ThiC-associated"/>
    <property type="match status" value="1"/>
</dbReference>
<dbReference type="Pfam" id="PF01964">
    <property type="entry name" value="ThiC_Rad_SAM"/>
    <property type="match status" value="1"/>
</dbReference>
<dbReference type="SFLD" id="SFLDF00407">
    <property type="entry name" value="phosphomethylpyrimidine_syntha"/>
    <property type="match status" value="1"/>
</dbReference>
<dbReference type="SFLD" id="SFLDG01114">
    <property type="entry name" value="phosphomethylpyrimidine_syntha"/>
    <property type="match status" value="1"/>
</dbReference>
<dbReference type="SFLD" id="SFLDS00113">
    <property type="entry name" value="Radical_SAM_Phosphomethylpyrim"/>
    <property type="match status" value="1"/>
</dbReference>
<organism>
    <name type="scientific">Salmonella arizonae (strain ATCC BAA-731 / CDC346-86 / RSK2980)</name>
    <dbReference type="NCBI Taxonomy" id="41514"/>
    <lineage>
        <taxon>Bacteria</taxon>
        <taxon>Pseudomonadati</taxon>
        <taxon>Pseudomonadota</taxon>
        <taxon>Gammaproteobacteria</taxon>
        <taxon>Enterobacterales</taxon>
        <taxon>Enterobacteriaceae</taxon>
        <taxon>Salmonella</taxon>
    </lineage>
</organism>
<comment type="function">
    <text evidence="1">Catalyzes the synthesis of the hydroxymethylpyrimidine phosphate (HMP-P) moiety of thiamine from aminoimidazole ribotide (AIR) in a radical S-adenosyl-L-methionine (SAM)-dependent reaction.</text>
</comment>
<comment type="catalytic activity">
    <reaction evidence="1">
        <text>5-amino-1-(5-phospho-beta-D-ribosyl)imidazole + S-adenosyl-L-methionine = 4-amino-2-methyl-5-(phosphooxymethyl)pyrimidine + CO + 5'-deoxyadenosine + formate + L-methionine + 3 H(+)</text>
        <dbReference type="Rhea" id="RHEA:24840"/>
        <dbReference type="ChEBI" id="CHEBI:15378"/>
        <dbReference type="ChEBI" id="CHEBI:15740"/>
        <dbReference type="ChEBI" id="CHEBI:17245"/>
        <dbReference type="ChEBI" id="CHEBI:17319"/>
        <dbReference type="ChEBI" id="CHEBI:57844"/>
        <dbReference type="ChEBI" id="CHEBI:58354"/>
        <dbReference type="ChEBI" id="CHEBI:59789"/>
        <dbReference type="ChEBI" id="CHEBI:137981"/>
        <dbReference type="EC" id="4.1.99.17"/>
    </reaction>
</comment>
<comment type="cofactor">
    <cofactor evidence="1">
        <name>[4Fe-4S] cluster</name>
        <dbReference type="ChEBI" id="CHEBI:49883"/>
    </cofactor>
    <text evidence="1">Binds 1 [4Fe-4S] cluster per subunit. The cluster is coordinated with 3 cysteines and an exchangeable S-adenosyl-L-methionine.</text>
</comment>
<comment type="pathway">
    <text evidence="1">Cofactor biosynthesis; thiamine diphosphate biosynthesis.</text>
</comment>
<comment type="subunit">
    <text evidence="1">Homodimer.</text>
</comment>
<comment type="similarity">
    <text evidence="1">Belongs to the ThiC family.</text>
</comment>
<evidence type="ECO:0000255" key="1">
    <source>
        <dbReference type="HAMAP-Rule" id="MF_00089"/>
    </source>
</evidence>
<gene>
    <name evidence="1" type="primary">thiC</name>
    <name type="ordered locus">SARI_03494</name>
</gene>
<proteinExistence type="inferred from homology"/>
<reference key="1">
    <citation type="submission" date="2007-11" db="EMBL/GenBank/DDBJ databases">
        <authorList>
            <consortium name="The Salmonella enterica serovar Arizonae Genome Sequencing Project"/>
            <person name="McClelland M."/>
            <person name="Sanderson E.K."/>
            <person name="Porwollik S."/>
            <person name="Spieth J."/>
            <person name="Clifton W.S."/>
            <person name="Fulton R."/>
            <person name="Chunyan W."/>
            <person name="Wollam A."/>
            <person name="Shah N."/>
            <person name="Pepin K."/>
            <person name="Bhonagiri V."/>
            <person name="Nash W."/>
            <person name="Johnson M."/>
            <person name="Thiruvilangam P."/>
            <person name="Wilson R."/>
        </authorList>
    </citation>
    <scope>NUCLEOTIDE SEQUENCE [LARGE SCALE GENOMIC DNA]</scope>
    <source>
        <strain>ATCC BAA-731 / CDC346-86 / RSK2980</strain>
    </source>
</reference>
<feature type="chain" id="PRO_1000075443" description="Phosphomethylpyrimidine synthase">
    <location>
        <begin position="1"/>
        <end position="631"/>
    </location>
</feature>
<feature type="binding site" evidence="1">
    <location>
        <position position="239"/>
    </location>
    <ligand>
        <name>substrate</name>
    </ligand>
</feature>
<feature type="binding site" evidence="1">
    <location>
        <position position="268"/>
    </location>
    <ligand>
        <name>substrate</name>
    </ligand>
</feature>
<feature type="binding site" evidence="1">
    <location>
        <position position="297"/>
    </location>
    <ligand>
        <name>substrate</name>
    </ligand>
</feature>
<feature type="binding site" evidence="1">
    <location>
        <position position="333"/>
    </location>
    <ligand>
        <name>substrate</name>
    </ligand>
</feature>
<feature type="binding site" evidence="1">
    <location>
        <begin position="353"/>
        <end position="355"/>
    </location>
    <ligand>
        <name>substrate</name>
    </ligand>
</feature>
<feature type="binding site" evidence="1">
    <location>
        <begin position="394"/>
        <end position="397"/>
    </location>
    <ligand>
        <name>substrate</name>
    </ligand>
</feature>
<feature type="binding site" evidence="1">
    <location>
        <position position="433"/>
    </location>
    <ligand>
        <name>substrate</name>
    </ligand>
</feature>
<feature type="binding site" evidence="1">
    <location>
        <position position="437"/>
    </location>
    <ligand>
        <name>Zn(2+)</name>
        <dbReference type="ChEBI" id="CHEBI:29105"/>
    </ligand>
</feature>
<feature type="binding site" evidence="1">
    <location>
        <position position="460"/>
    </location>
    <ligand>
        <name>substrate</name>
    </ligand>
</feature>
<feature type="binding site" evidence="1">
    <location>
        <position position="501"/>
    </location>
    <ligand>
        <name>Zn(2+)</name>
        <dbReference type="ChEBI" id="CHEBI:29105"/>
    </ligand>
</feature>
<feature type="binding site" evidence="1">
    <location>
        <position position="581"/>
    </location>
    <ligand>
        <name>[4Fe-4S] cluster</name>
        <dbReference type="ChEBI" id="CHEBI:49883"/>
        <note>4Fe-4S-S-AdoMet</note>
    </ligand>
</feature>
<feature type="binding site" evidence="1">
    <location>
        <position position="584"/>
    </location>
    <ligand>
        <name>[4Fe-4S] cluster</name>
        <dbReference type="ChEBI" id="CHEBI:49883"/>
        <note>4Fe-4S-S-AdoMet</note>
    </ligand>
</feature>
<feature type="binding site" evidence="1">
    <location>
        <position position="589"/>
    </location>
    <ligand>
        <name>[4Fe-4S] cluster</name>
        <dbReference type="ChEBI" id="CHEBI:49883"/>
        <note>4Fe-4S-S-AdoMet</note>
    </ligand>
</feature>
<protein>
    <recommendedName>
        <fullName evidence="1">Phosphomethylpyrimidine synthase</fullName>
        <ecNumber evidence="1">4.1.99.17</ecNumber>
    </recommendedName>
    <alternativeName>
        <fullName evidence="1">Hydroxymethylpyrimidine phosphate synthase</fullName>
        <shortName evidence="1">HMP-P synthase</shortName>
        <shortName evidence="1">HMP-phosphate synthase</shortName>
        <shortName evidence="1">HMPP synthase</shortName>
    </alternativeName>
    <alternativeName>
        <fullName evidence="1">Thiamine biosynthesis protein ThiC</fullName>
    </alternativeName>
</protein>
<keyword id="KW-0004">4Fe-4S</keyword>
<keyword id="KW-0408">Iron</keyword>
<keyword id="KW-0411">Iron-sulfur</keyword>
<keyword id="KW-0456">Lyase</keyword>
<keyword id="KW-0479">Metal-binding</keyword>
<keyword id="KW-1185">Reference proteome</keyword>
<keyword id="KW-0949">S-adenosyl-L-methionine</keyword>
<keyword id="KW-0784">Thiamine biosynthesis</keyword>
<keyword id="KW-0862">Zinc</keyword>
<sequence>MSTTTLTRREQRAKAQHFIDTLEGTAFPNSKRIYVTGSQHDIRVPMREIQLSPTLISGTKDHPQYEENEAIPVYDTSGPYGDPNIAINIQQGLAKLRQPWIEARADVETLSNRSSAYTRERLTDEGLNALRFTGLLTPKRAKAGHCVTQLHYARNGIVTPEMAFIAIRENMGRERIRSEVLRHQHPGENFGARLPENITPEFVRDEVAAGRAIIPANINHPESEPMIIGRNFLVKVNANIGNSAVTSSIEEEVEKLVWATRWGADTVMDLSTGRYIHETREWILRNSPVPIGTVPIYQALEKVNGIAEDLTWEAFRDTLLEQAEQGVDYFTIHAGVLLRYVPMTAKRLTGIVSRGGSIMAKWCLSHHKENFLFEHFREICEICAAYDVSLSLGDGLRPGSIQDANDDAQFAELHTLGELTKIAWEYDVQVMIEGPGHVPMQMIRRNMTEELEHCHEAPFYTLGPLTTDIAPGYDHFTSGIGAAMIGWFGCAMLCYVTPKEHLGLPNKEDVKQGLITYKIAAHAADLAKGHPGAQIRDNAMSKARFEFRWEDQFNLALDPFTARAWHDETLPHESGKVAHFCSMCGPKFCSMKISQEVRDYAAAQTIEVGMANMSESFRAKGGEIYLKREEA</sequence>